<accession>C3L0B6</accession>
<sequence length="688" mass="75727">MAKIRVYELAKELNISSKELITLLEEEFSVEVKNHMSAIEDEDADLIKELLSGKEKSEKTKEEDDEIETTAKNPIKESINNKKSNKRDDKKEKVNTENAEDMGIITMTSDTITVKEISDKLEKSYAEVIKELMLMGVMASVNQEINFEMAEKLAAKFDMEILKEDEDEEEDLEDILKDNEEEEHLQKRSPIITVMGHVDHGKTSLLDAIRKSKVTSTEAGGITQHIGAYTVELNGEAITFLDTPGHAAFTAMRARGAQVTDIVILVVAADDGIMPQTQEAISHCKAANVPLIVAINKIDRPGANIDKVKQELTEYGLVAEDWGGDTICVPVSAHTKEGIDDLLEMILLSSEILELKANPNRKAKGTVVEAKLDKGRGAVATLLIQNGTLRVGDSIVVGSTYGRIRAMFNDKGRNIKSAGPSTPVEILGLSEVPEAGDKFYQVKDEKTARGIADKRKEKIRDEYLQSTHKVSLEDLYNQIQEGTVKELGLIVKADVQGSVEALKQSLEKLSTEEVKVRVIHGGVGAINETDVTLATASNGIILGFNVRPDNNAIIASERDGVDIKTYRVIYDAIEDIKSAMLGMLEPEFKEVVIGTAEVRQVYKISSVGTIAGAYVQTGKLARNAGARVIRDGIVIFESELASLKRFKDDAKEVAQGYECGLSIEKFNDIKEGDIIECFIMEEIKKKTL</sequence>
<comment type="function">
    <text evidence="2">One of the essential components for the initiation of protein synthesis. Protects formylmethionyl-tRNA from spontaneous hydrolysis and promotes its binding to the 30S ribosomal subunits. Also involved in the hydrolysis of GTP during the formation of the 70S ribosomal complex.</text>
</comment>
<comment type="subcellular location">
    <subcellularLocation>
        <location evidence="2">Cytoplasm</location>
    </subcellularLocation>
</comment>
<comment type="similarity">
    <text evidence="2">Belongs to the TRAFAC class translation factor GTPase superfamily. Classic translation factor GTPase family. IF-2 subfamily.</text>
</comment>
<evidence type="ECO:0000250" key="1"/>
<evidence type="ECO:0000255" key="2">
    <source>
        <dbReference type="HAMAP-Rule" id="MF_00100"/>
    </source>
</evidence>
<evidence type="ECO:0000256" key="3">
    <source>
        <dbReference type="SAM" id="MobiDB-lite"/>
    </source>
</evidence>
<gene>
    <name evidence="2" type="primary">infB</name>
    <name type="ordered locus">CLJ_B2643</name>
</gene>
<dbReference type="EMBL" id="CP001083">
    <property type="protein sequence ID" value="ACQ52939.1"/>
    <property type="molecule type" value="Genomic_DNA"/>
</dbReference>
<dbReference type="RefSeq" id="WP_003362559.1">
    <property type="nucleotide sequence ID" value="NC_012658.1"/>
</dbReference>
<dbReference type="SMR" id="C3L0B6"/>
<dbReference type="KEGG" id="cbi:CLJ_B2643"/>
<dbReference type="HOGENOM" id="CLU_006301_5_1_9"/>
<dbReference type="Proteomes" id="UP000002333">
    <property type="component" value="Chromosome"/>
</dbReference>
<dbReference type="GO" id="GO:0005829">
    <property type="term" value="C:cytosol"/>
    <property type="evidence" value="ECO:0007669"/>
    <property type="project" value="TreeGrafter"/>
</dbReference>
<dbReference type="GO" id="GO:0005525">
    <property type="term" value="F:GTP binding"/>
    <property type="evidence" value="ECO:0007669"/>
    <property type="project" value="UniProtKB-KW"/>
</dbReference>
<dbReference type="GO" id="GO:0003924">
    <property type="term" value="F:GTPase activity"/>
    <property type="evidence" value="ECO:0007669"/>
    <property type="project" value="UniProtKB-UniRule"/>
</dbReference>
<dbReference type="GO" id="GO:0003743">
    <property type="term" value="F:translation initiation factor activity"/>
    <property type="evidence" value="ECO:0007669"/>
    <property type="project" value="UniProtKB-UniRule"/>
</dbReference>
<dbReference type="CDD" id="cd01887">
    <property type="entry name" value="IF2_eIF5B"/>
    <property type="match status" value="1"/>
</dbReference>
<dbReference type="CDD" id="cd03702">
    <property type="entry name" value="IF2_mtIF2_II"/>
    <property type="match status" value="1"/>
</dbReference>
<dbReference type="CDD" id="cd03692">
    <property type="entry name" value="mtIF2_IVc"/>
    <property type="match status" value="1"/>
</dbReference>
<dbReference type="FunFam" id="2.40.30.10:FF:000007">
    <property type="entry name" value="Translation initiation factor IF-2"/>
    <property type="match status" value="1"/>
</dbReference>
<dbReference type="FunFam" id="2.40.30.10:FF:000008">
    <property type="entry name" value="Translation initiation factor IF-2"/>
    <property type="match status" value="1"/>
</dbReference>
<dbReference type="FunFam" id="3.40.50.10050:FF:000001">
    <property type="entry name" value="Translation initiation factor IF-2"/>
    <property type="match status" value="1"/>
</dbReference>
<dbReference type="FunFam" id="3.40.50.300:FF:000019">
    <property type="entry name" value="Translation initiation factor IF-2"/>
    <property type="match status" value="1"/>
</dbReference>
<dbReference type="Gene3D" id="1.10.10.2480">
    <property type="match status" value="1"/>
</dbReference>
<dbReference type="Gene3D" id="3.40.50.300">
    <property type="entry name" value="P-loop containing nucleotide triphosphate hydrolases"/>
    <property type="match status" value="1"/>
</dbReference>
<dbReference type="Gene3D" id="2.40.30.10">
    <property type="entry name" value="Translation factors"/>
    <property type="match status" value="2"/>
</dbReference>
<dbReference type="Gene3D" id="3.40.50.10050">
    <property type="entry name" value="Translation initiation factor IF- 2, domain 3"/>
    <property type="match status" value="1"/>
</dbReference>
<dbReference type="HAMAP" id="MF_00100_B">
    <property type="entry name" value="IF_2_B"/>
    <property type="match status" value="1"/>
</dbReference>
<dbReference type="InterPro" id="IPR053905">
    <property type="entry name" value="EF-G-like_DII"/>
</dbReference>
<dbReference type="InterPro" id="IPR044145">
    <property type="entry name" value="IF2_II"/>
</dbReference>
<dbReference type="InterPro" id="IPR006847">
    <property type="entry name" value="IF2_N"/>
</dbReference>
<dbReference type="InterPro" id="IPR027417">
    <property type="entry name" value="P-loop_NTPase"/>
</dbReference>
<dbReference type="InterPro" id="IPR005225">
    <property type="entry name" value="Small_GTP-bd"/>
</dbReference>
<dbReference type="InterPro" id="IPR000795">
    <property type="entry name" value="T_Tr_GTP-bd_dom"/>
</dbReference>
<dbReference type="InterPro" id="IPR000178">
    <property type="entry name" value="TF_IF2_bacterial-like"/>
</dbReference>
<dbReference type="InterPro" id="IPR015760">
    <property type="entry name" value="TIF_IF2"/>
</dbReference>
<dbReference type="InterPro" id="IPR023115">
    <property type="entry name" value="TIF_IF2_dom3"/>
</dbReference>
<dbReference type="InterPro" id="IPR036925">
    <property type="entry name" value="TIF_IF2_dom3_sf"/>
</dbReference>
<dbReference type="InterPro" id="IPR009000">
    <property type="entry name" value="Transl_B-barrel_sf"/>
</dbReference>
<dbReference type="NCBIfam" id="TIGR00487">
    <property type="entry name" value="IF-2"/>
    <property type="match status" value="1"/>
</dbReference>
<dbReference type="NCBIfam" id="TIGR00231">
    <property type="entry name" value="small_GTP"/>
    <property type="match status" value="1"/>
</dbReference>
<dbReference type="PANTHER" id="PTHR43381:SF5">
    <property type="entry name" value="TR-TYPE G DOMAIN-CONTAINING PROTEIN"/>
    <property type="match status" value="1"/>
</dbReference>
<dbReference type="PANTHER" id="PTHR43381">
    <property type="entry name" value="TRANSLATION INITIATION FACTOR IF-2-RELATED"/>
    <property type="match status" value="1"/>
</dbReference>
<dbReference type="Pfam" id="PF22042">
    <property type="entry name" value="EF-G_D2"/>
    <property type="match status" value="1"/>
</dbReference>
<dbReference type="Pfam" id="PF00009">
    <property type="entry name" value="GTP_EFTU"/>
    <property type="match status" value="1"/>
</dbReference>
<dbReference type="Pfam" id="PF11987">
    <property type="entry name" value="IF-2"/>
    <property type="match status" value="1"/>
</dbReference>
<dbReference type="Pfam" id="PF04760">
    <property type="entry name" value="IF2_N"/>
    <property type="match status" value="2"/>
</dbReference>
<dbReference type="SUPFAM" id="SSF52156">
    <property type="entry name" value="Initiation factor IF2/eIF5b, domain 3"/>
    <property type="match status" value="1"/>
</dbReference>
<dbReference type="SUPFAM" id="SSF52540">
    <property type="entry name" value="P-loop containing nucleoside triphosphate hydrolases"/>
    <property type="match status" value="1"/>
</dbReference>
<dbReference type="SUPFAM" id="SSF50447">
    <property type="entry name" value="Translation proteins"/>
    <property type="match status" value="2"/>
</dbReference>
<dbReference type="PROSITE" id="PS51722">
    <property type="entry name" value="G_TR_2"/>
    <property type="match status" value="1"/>
</dbReference>
<dbReference type="PROSITE" id="PS01176">
    <property type="entry name" value="IF2"/>
    <property type="match status" value="1"/>
</dbReference>
<feature type="chain" id="PRO_1000202767" description="Translation initiation factor IF-2">
    <location>
        <begin position="1"/>
        <end position="688"/>
    </location>
</feature>
<feature type="domain" description="tr-type G">
    <location>
        <begin position="187"/>
        <end position="354"/>
    </location>
</feature>
<feature type="region of interest" description="Disordered" evidence="3">
    <location>
        <begin position="50"/>
        <end position="95"/>
    </location>
</feature>
<feature type="region of interest" description="G1" evidence="1">
    <location>
        <begin position="196"/>
        <end position="203"/>
    </location>
</feature>
<feature type="region of interest" description="G2" evidence="1">
    <location>
        <begin position="221"/>
        <end position="225"/>
    </location>
</feature>
<feature type="region of interest" description="G3" evidence="1">
    <location>
        <begin position="242"/>
        <end position="245"/>
    </location>
</feature>
<feature type="region of interest" description="G4" evidence="1">
    <location>
        <begin position="296"/>
        <end position="299"/>
    </location>
</feature>
<feature type="region of interest" description="G5" evidence="1">
    <location>
        <begin position="332"/>
        <end position="334"/>
    </location>
</feature>
<feature type="compositionally biased region" description="Basic and acidic residues" evidence="3">
    <location>
        <begin position="50"/>
        <end position="62"/>
    </location>
</feature>
<feature type="compositionally biased region" description="Low complexity" evidence="3">
    <location>
        <begin position="72"/>
        <end position="82"/>
    </location>
</feature>
<feature type="compositionally biased region" description="Basic and acidic residues" evidence="3">
    <location>
        <begin position="86"/>
        <end position="95"/>
    </location>
</feature>
<feature type="binding site" evidence="2">
    <location>
        <begin position="196"/>
        <end position="203"/>
    </location>
    <ligand>
        <name>GTP</name>
        <dbReference type="ChEBI" id="CHEBI:37565"/>
    </ligand>
</feature>
<feature type="binding site" evidence="2">
    <location>
        <begin position="242"/>
        <end position="246"/>
    </location>
    <ligand>
        <name>GTP</name>
        <dbReference type="ChEBI" id="CHEBI:37565"/>
    </ligand>
</feature>
<feature type="binding site" evidence="2">
    <location>
        <begin position="296"/>
        <end position="299"/>
    </location>
    <ligand>
        <name>GTP</name>
        <dbReference type="ChEBI" id="CHEBI:37565"/>
    </ligand>
</feature>
<reference key="1">
    <citation type="submission" date="2008-05" db="EMBL/GenBank/DDBJ databases">
        <title>Genome sequence of Clostridium botulinum Ba4 strain 657.</title>
        <authorList>
            <person name="Shrivastava S."/>
            <person name="Brown J.L."/>
            <person name="Bruce D."/>
            <person name="Detter C."/>
            <person name="Munk C."/>
            <person name="Smith L.A."/>
            <person name="Smith T.J."/>
            <person name="Sutton G."/>
            <person name="Brettin T.S."/>
        </authorList>
    </citation>
    <scope>NUCLEOTIDE SEQUENCE [LARGE SCALE GENOMIC DNA]</scope>
    <source>
        <strain>657 / Type Ba4</strain>
    </source>
</reference>
<keyword id="KW-0963">Cytoplasm</keyword>
<keyword id="KW-0342">GTP-binding</keyword>
<keyword id="KW-0396">Initiation factor</keyword>
<keyword id="KW-0547">Nucleotide-binding</keyword>
<keyword id="KW-0648">Protein biosynthesis</keyword>
<name>IF2_CLOB6</name>
<organism>
    <name type="scientific">Clostridium botulinum (strain 657 / Type Ba4)</name>
    <dbReference type="NCBI Taxonomy" id="515621"/>
    <lineage>
        <taxon>Bacteria</taxon>
        <taxon>Bacillati</taxon>
        <taxon>Bacillota</taxon>
        <taxon>Clostridia</taxon>
        <taxon>Eubacteriales</taxon>
        <taxon>Clostridiaceae</taxon>
        <taxon>Clostridium</taxon>
    </lineage>
</organism>
<proteinExistence type="inferred from homology"/>
<protein>
    <recommendedName>
        <fullName evidence="2">Translation initiation factor IF-2</fullName>
    </recommendedName>
</protein>